<dbReference type="EMBL" id="AL035526">
    <property type="protein sequence ID" value="CAB37446.1"/>
    <property type="molecule type" value="Genomic_DNA"/>
</dbReference>
<dbReference type="EMBL" id="AL161549">
    <property type="protein sequence ID" value="CAB78863.1"/>
    <property type="molecule type" value="Genomic_DNA"/>
</dbReference>
<dbReference type="EMBL" id="CP002687">
    <property type="protein sequence ID" value="AEE84068.1"/>
    <property type="molecule type" value="Genomic_DNA"/>
</dbReference>
<dbReference type="EMBL" id="BT010856">
    <property type="protein sequence ID" value="AAR24223.1"/>
    <property type="molecule type" value="mRNA"/>
</dbReference>
<dbReference type="EMBL" id="BT014677">
    <property type="protein sequence ID" value="AAT35235.1"/>
    <property type="molecule type" value="mRNA"/>
</dbReference>
<dbReference type="PIR" id="T04853">
    <property type="entry name" value="T04853"/>
</dbReference>
<dbReference type="RefSeq" id="NP_001319986.1">
    <property type="nucleotide sequence ID" value="NM_001341301.1"/>
</dbReference>
<dbReference type="SMR" id="Q9SN52"/>
<dbReference type="FunCoup" id="Q9SN52">
    <property type="interactions" value="12"/>
</dbReference>
<dbReference type="STRING" id="3702.Q9SN52"/>
<dbReference type="PaxDb" id="3702-AT4G18610.1"/>
<dbReference type="ProteomicsDB" id="238595"/>
<dbReference type="EnsemblPlants" id="AT4G18610.1">
    <property type="protein sequence ID" value="AT4G18610.1"/>
    <property type="gene ID" value="AT4G18610"/>
</dbReference>
<dbReference type="GeneID" id="28720146"/>
<dbReference type="Gramene" id="AT4G18610.1">
    <property type="protein sequence ID" value="AT4G18610.1"/>
    <property type="gene ID" value="AT4G18610"/>
</dbReference>
<dbReference type="KEGG" id="ath:AT4G18610"/>
<dbReference type="Araport" id="AT4G18610"/>
<dbReference type="TAIR" id="AT4G18610">
    <property type="gene designation" value="LSH9"/>
</dbReference>
<dbReference type="eggNOG" id="ENOG502QTCS">
    <property type="taxonomic scope" value="Eukaryota"/>
</dbReference>
<dbReference type="HOGENOM" id="CLU_071168_1_1_1"/>
<dbReference type="InParanoid" id="Q9SN52"/>
<dbReference type="OMA" id="MISQFDY"/>
<dbReference type="PhylomeDB" id="Q9SN52"/>
<dbReference type="PRO" id="PR:Q9SN52"/>
<dbReference type="Proteomes" id="UP000006548">
    <property type="component" value="Chromosome 4"/>
</dbReference>
<dbReference type="ExpressionAtlas" id="Q9SN52">
    <property type="expression patterns" value="baseline and differential"/>
</dbReference>
<dbReference type="GO" id="GO:0005634">
    <property type="term" value="C:nucleus"/>
    <property type="evidence" value="ECO:0000250"/>
    <property type="project" value="UniProtKB"/>
</dbReference>
<dbReference type="GO" id="GO:0003677">
    <property type="term" value="F:DNA binding"/>
    <property type="evidence" value="ECO:0007669"/>
    <property type="project" value="UniProtKB-KW"/>
</dbReference>
<dbReference type="GO" id="GO:0009299">
    <property type="term" value="P:mRNA transcription"/>
    <property type="evidence" value="ECO:0000250"/>
    <property type="project" value="UniProtKB"/>
</dbReference>
<dbReference type="GO" id="GO:0090698">
    <property type="term" value="P:post-embryonic plant morphogenesis"/>
    <property type="evidence" value="ECO:0000250"/>
    <property type="project" value="UniProtKB"/>
</dbReference>
<dbReference type="InterPro" id="IPR040222">
    <property type="entry name" value="ALOG"/>
</dbReference>
<dbReference type="InterPro" id="IPR006936">
    <property type="entry name" value="ALOG_dom"/>
</dbReference>
<dbReference type="PANTHER" id="PTHR31165">
    <property type="entry name" value="PROTEIN G1-LIKE2"/>
    <property type="match status" value="1"/>
</dbReference>
<dbReference type="PANTHER" id="PTHR31165:SF8">
    <property type="entry name" value="PROTEIN LIGHT-DEPENDENT SHORT HYPOCOTYLS 9"/>
    <property type="match status" value="1"/>
</dbReference>
<dbReference type="Pfam" id="PF04852">
    <property type="entry name" value="ALOG_dom"/>
    <property type="match status" value="1"/>
</dbReference>
<dbReference type="PROSITE" id="PS51697">
    <property type="entry name" value="ALOG"/>
    <property type="match status" value="1"/>
</dbReference>
<proteinExistence type="evidence at protein level"/>
<protein>
    <recommendedName>
        <fullName>Protein LIGHT-DEPENDENT SHORT HYPOCOTYLS 9</fullName>
    </recommendedName>
    <alternativeName>
        <fullName>Protein ORGAN BOUNDARY 9</fullName>
    </alternativeName>
</protein>
<organism>
    <name type="scientific">Arabidopsis thaliana</name>
    <name type="common">Mouse-ear cress</name>
    <dbReference type="NCBI Taxonomy" id="3702"/>
    <lineage>
        <taxon>Eukaryota</taxon>
        <taxon>Viridiplantae</taxon>
        <taxon>Streptophyta</taxon>
        <taxon>Embryophyta</taxon>
        <taxon>Tracheophyta</taxon>
        <taxon>Spermatophyta</taxon>
        <taxon>Magnoliopsida</taxon>
        <taxon>eudicotyledons</taxon>
        <taxon>Gunneridae</taxon>
        <taxon>Pentapetalae</taxon>
        <taxon>rosids</taxon>
        <taxon>malvids</taxon>
        <taxon>Brassicales</taxon>
        <taxon>Brassicaceae</taxon>
        <taxon>Camelineae</taxon>
        <taxon>Arabidopsis</taxon>
    </lineage>
</organism>
<name>LSH9_ARATH</name>
<comment type="function">
    <text evidence="1">Probable transcription regulator that acts as a developmental regulator by promoting cell growth in response to light.</text>
</comment>
<comment type="subcellular location">
    <subcellularLocation>
        <location evidence="1">Nucleus</location>
    </subcellularLocation>
</comment>
<comment type="similarity">
    <text evidence="4">Belongs to the plant homeotic and developmental regulators ALOG protein family.</text>
</comment>
<evidence type="ECO:0000250" key="1"/>
<evidence type="ECO:0000255" key="2">
    <source>
        <dbReference type="PROSITE-ProRule" id="PRU01033"/>
    </source>
</evidence>
<evidence type="ECO:0000256" key="3">
    <source>
        <dbReference type="SAM" id="MobiDB-lite"/>
    </source>
</evidence>
<evidence type="ECO:0000305" key="4"/>
<keyword id="KW-0217">Developmental protein</keyword>
<keyword id="KW-0238">DNA-binding</keyword>
<keyword id="KW-0539">Nucleus</keyword>
<keyword id="KW-1185">Reference proteome</keyword>
<keyword id="KW-0804">Transcription</keyword>
<keyword id="KW-0805">Transcription regulation</keyword>
<gene>
    <name type="primary">LSH9</name>
    <name type="synonym">OBO9</name>
    <name type="ordered locus">At4g18610</name>
    <name type="ORF">F28A21.20</name>
</gene>
<reference key="1">
    <citation type="journal article" date="1999" name="Nature">
        <title>Sequence and analysis of chromosome 4 of the plant Arabidopsis thaliana.</title>
        <authorList>
            <person name="Mayer K.F.X."/>
            <person name="Schueller C."/>
            <person name="Wambutt R."/>
            <person name="Murphy G."/>
            <person name="Volckaert G."/>
            <person name="Pohl T."/>
            <person name="Duesterhoeft A."/>
            <person name="Stiekema W."/>
            <person name="Entian K.-D."/>
            <person name="Terryn N."/>
            <person name="Harris B."/>
            <person name="Ansorge W."/>
            <person name="Brandt P."/>
            <person name="Grivell L.A."/>
            <person name="Rieger M."/>
            <person name="Weichselgartner M."/>
            <person name="de Simone V."/>
            <person name="Obermaier B."/>
            <person name="Mache R."/>
            <person name="Mueller M."/>
            <person name="Kreis M."/>
            <person name="Delseny M."/>
            <person name="Puigdomenech P."/>
            <person name="Watson M."/>
            <person name="Schmidtheini T."/>
            <person name="Reichert B."/>
            <person name="Portetelle D."/>
            <person name="Perez-Alonso M."/>
            <person name="Boutry M."/>
            <person name="Bancroft I."/>
            <person name="Vos P."/>
            <person name="Hoheisel J."/>
            <person name="Zimmermann W."/>
            <person name="Wedler H."/>
            <person name="Ridley P."/>
            <person name="Langham S.-A."/>
            <person name="McCullagh B."/>
            <person name="Bilham L."/>
            <person name="Robben J."/>
            <person name="van der Schueren J."/>
            <person name="Grymonprez B."/>
            <person name="Chuang Y.-J."/>
            <person name="Vandenbussche F."/>
            <person name="Braeken M."/>
            <person name="Weltjens I."/>
            <person name="Voet M."/>
            <person name="Bastiaens I."/>
            <person name="Aert R."/>
            <person name="Defoor E."/>
            <person name="Weitzenegger T."/>
            <person name="Bothe G."/>
            <person name="Ramsperger U."/>
            <person name="Hilbert H."/>
            <person name="Braun M."/>
            <person name="Holzer E."/>
            <person name="Brandt A."/>
            <person name="Peters S."/>
            <person name="van Staveren M."/>
            <person name="Dirkse W."/>
            <person name="Mooijman P."/>
            <person name="Klein Lankhorst R."/>
            <person name="Rose M."/>
            <person name="Hauf J."/>
            <person name="Koetter P."/>
            <person name="Berneiser S."/>
            <person name="Hempel S."/>
            <person name="Feldpausch M."/>
            <person name="Lamberth S."/>
            <person name="Van den Daele H."/>
            <person name="De Keyser A."/>
            <person name="Buysshaert C."/>
            <person name="Gielen J."/>
            <person name="Villarroel R."/>
            <person name="De Clercq R."/>
            <person name="van Montagu M."/>
            <person name="Rogers J."/>
            <person name="Cronin A."/>
            <person name="Quail M.A."/>
            <person name="Bray-Allen S."/>
            <person name="Clark L."/>
            <person name="Doggett J."/>
            <person name="Hall S."/>
            <person name="Kay M."/>
            <person name="Lennard N."/>
            <person name="McLay K."/>
            <person name="Mayes R."/>
            <person name="Pettett A."/>
            <person name="Rajandream M.A."/>
            <person name="Lyne M."/>
            <person name="Benes V."/>
            <person name="Rechmann S."/>
            <person name="Borkova D."/>
            <person name="Bloecker H."/>
            <person name="Scharfe M."/>
            <person name="Grimm M."/>
            <person name="Loehnert T.-H."/>
            <person name="Dose S."/>
            <person name="de Haan M."/>
            <person name="Maarse A.C."/>
            <person name="Schaefer M."/>
            <person name="Mueller-Auer S."/>
            <person name="Gabel C."/>
            <person name="Fuchs M."/>
            <person name="Fartmann B."/>
            <person name="Granderath K."/>
            <person name="Dauner D."/>
            <person name="Herzl A."/>
            <person name="Neumann S."/>
            <person name="Argiriou A."/>
            <person name="Vitale D."/>
            <person name="Liguori R."/>
            <person name="Piravandi E."/>
            <person name="Massenet O."/>
            <person name="Quigley F."/>
            <person name="Clabauld G."/>
            <person name="Muendlein A."/>
            <person name="Felber R."/>
            <person name="Schnabl S."/>
            <person name="Hiller R."/>
            <person name="Schmidt W."/>
            <person name="Lecharny A."/>
            <person name="Aubourg S."/>
            <person name="Chefdor F."/>
            <person name="Cooke R."/>
            <person name="Berger C."/>
            <person name="Monfort A."/>
            <person name="Casacuberta E."/>
            <person name="Gibbons T."/>
            <person name="Weber N."/>
            <person name="Vandenbol M."/>
            <person name="Bargues M."/>
            <person name="Terol J."/>
            <person name="Torres A."/>
            <person name="Perez-Perez A."/>
            <person name="Purnelle B."/>
            <person name="Bent E."/>
            <person name="Johnson S."/>
            <person name="Tacon D."/>
            <person name="Jesse T."/>
            <person name="Heijnen L."/>
            <person name="Schwarz S."/>
            <person name="Scholler P."/>
            <person name="Heber S."/>
            <person name="Francs P."/>
            <person name="Bielke C."/>
            <person name="Frishman D."/>
            <person name="Haase D."/>
            <person name="Lemcke K."/>
            <person name="Mewes H.-W."/>
            <person name="Stocker S."/>
            <person name="Zaccaria P."/>
            <person name="Bevan M."/>
            <person name="Wilson R.K."/>
            <person name="de la Bastide M."/>
            <person name="Habermann K."/>
            <person name="Parnell L."/>
            <person name="Dedhia N."/>
            <person name="Gnoj L."/>
            <person name="Schutz K."/>
            <person name="Huang E."/>
            <person name="Spiegel L."/>
            <person name="Sekhon M."/>
            <person name="Murray J."/>
            <person name="Sheet P."/>
            <person name="Cordes M."/>
            <person name="Abu-Threideh J."/>
            <person name="Stoneking T."/>
            <person name="Kalicki J."/>
            <person name="Graves T."/>
            <person name="Harmon G."/>
            <person name="Edwards J."/>
            <person name="Latreille P."/>
            <person name="Courtney L."/>
            <person name="Cloud J."/>
            <person name="Abbott A."/>
            <person name="Scott K."/>
            <person name="Johnson D."/>
            <person name="Minx P."/>
            <person name="Bentley D."/>
            <person name="Fulton B."/>
            <person name="Miller N."/>
            <person name="Greco T."/>
            <person name="Kemp K."/>
            <person name="Kramer J."/>
            <person name="Fulton L."/>
            <person name="Mardis E."/>
            <person name="Dante M."/>
            <person name="Pepin K."/>
            <person name="Hillier L.W."/>
            <person name="Nelson J."/>
            <person name="Spieth J."/>
            <person name="Ryan E."/>
            <person name="Andrews S."/>
            <person name="Geisel C."/>
            <person name="Layman D."/>
            <person name="Du H."/>
            <person name="Ali J."/>
            <person name="Berghoff A."/>
            <person name="Jones K."/>
            <person name="Drone K."/>
            <person name="Cotton M."/>
            <person name="Joshu C."/>
            <person name="Antonoiu B."/>
            <person name="Zidanic M."/>
            <person name="Strong C."/>
            <person name="Sun H."/>
            <person name="Lamar B."/>
            <person name="Yordan C."/>
            <person name="Ma P."/>
            <person name="Zhong J."/>
            <person name="Preston R."/>
            <person name="Vil D."/>
            <person name="Shekher M."/>
            <person name="Matero A."/>
            <person name="Shah R."/>
            <person name="Swaby I.K."/>
            <person name="O'Shaughnessy A."/>
            <person name="Rodriguez M."/>
            <person name="Hoffman J."/>
            <person name="Till S."/>
            <person name="Granat S."/>
            <person name="Shohdy N."/>
            <person name="Hasegawa A."/>
            <person name="Hameed A."/>
            <person name="Lodhi M."/>
            <person name="Johnson A."/>
            <person name="Chen E."/>
            <person name="Marra M.A."/>
            <person name="Martienssen R."/>
            <person name="McCombie W.R."/>
        </authorList>
    </citation>
    <scope>NUCLEOTIDE SEQUENCE [LARGE SCALE GENOMIC DNA]</scope>
    <source>
        <strain>cv. Columbia</strain>
    </source>
</reference>
<reference key="2">
    <citation type="journal article" date="2017" name="Plant J.">
        <title>Araport11: a complete reannotation of the Arabidopsis thaliana reference genome.</title>
        <authorList>
            <person name="Cheng C.Y."/>
            <person name="Krishnakumar V."/>
            <person name="Chan A.P."/>
            <person name="Thibaud-Nissen F."/>
            <person name="Schobel S."/>
            <person name="Town C.D."/>
        </authorList>
    </citation>
    <scope>GENOME REANNOTATION</scope>
    <source>
        <strain>cv. Columbia</strain>
    </source>
</reference>
<reference key="3">
    <citation type="submission" date="2004-05" db="EMBL/GenBank/DDBJ databases">
        <title>Arabidopsis ORF clones.</title>
        <authorList>
            <person name="Cheuk R.F."/>
            <person name="Chen H."/>
            <person name="Kim C.J."/>
            <person name="Shinn P."/>
            <person name="Ecker J.R."/>
        </authorList>
    </citation>
    <scope>NUCLEOTIDE SEQUENCE [LARGE SCALE MRNA]</scope>
    <source>
        <strain>cv. Columbia</strain>
    </source>
</reference>
<reference key="4">
    <citation type="journal article" date="2004" name="Plant J.">
        <title>Overexpression of LSH1, a member of an uncharacterised gene family, causes enhanced light regulation of seedling development.</title>
        <authorList>
            <person name="Zhao L."/>
            <person name="Nakazawa M."/>
            <person name="Takase T."/>
            <person name="Manabe K."/>
            <person name="Kobayashi M."/>
            <person name="Seki M."/>
            <person name="Shinozaki K."/>
            <person name="Matsui M."/>
        </authorList>
    </citation>
    <scope>GENE FAMILY</scope>
    <scope>NOMENCLATURE</scope>
    <source>
        <strain>cv. Columbia</strain>
    </source>
</reference>
<reference key="5">
    <citation type="journal article" date="2011" name="Proc. Natl. Acad. Sci. U.S.A.">
        <title>Organ boundary1 defines a gene expressed at the junction between the shoot apical meristem and lateral organs.</title>
        <authorList>
            <person name="Cho E."/>
            <person name="Zambryski P.C."/>
        </authorList>
    </citation>
    <scope>GENE FAMILY</scope>
</reference>
<reference key="6">
    <citation type="journal article" date="2012" name="Biol. Direct">
        <title>ALOG domains: provenance of plant homeotic and developmental regulators from the DNA-binding domain of a novel class of DIRS1-type retroposons.</title>
        <authorList>
            <person name="Iyer L.M."/>
            <person name="Aravind L."/>
        </authorList>
    </citation>
    <scope>DNA-BINDING</scope>
    <scope>GENE FAMILY</scope>
</reference>
<accession>Q9SN52</accession>
<feature type="chain" id="PRO_0000425296" description="Protein LIGHT-DEPENDENT SHORT HYPOCOTYLS 9">
    <location>
        <begin position="1"/>
        <end position="191"/>
    </location>
</feature>
<feature type="domain" description="ALOG" evidence="2">
    <location>
        <begin position="37"/>
        <end position="165"/>
    </location>
</feature>
<feature type="region of interest" description="Disordered" evidence="3">
    <location>
        <begin position="1"/>
        <end position="41"/>
    </location>
</feature>
<feature type="region of interest" description="Disordered" evidence="3">
    <location>
        <begin position="153"/>
        <end position="191"/>
    </location>
</feature>
<feature type="short sequence motif" description="Nuclear localization signal" evidence="1">
    <location>
        <begin position="163"/>
        <end position="167"/>
    </location>
</feature>
<feature type="compositionally biased region" description="Basic and acidic residues" evidence="3">
    <location>
        <begin position="1"/>
        <end position="14"/>
    </location>
</feature>
<feature type="compositionally biased region" description="Basic residues" evidence="3">
    <location>
        <begin position="160"/>
        <end position="169"/>
    </location>
</feature>
<feature type="compositionally biased region" description="Polar residues" evidence="3">
    <location>
        <begin position="181"/>
        <end position="191"/>
    </location>
</feature>
<sequence length="191" mass="21745">MSSDRHTPTKDPPDHPSSSSNHHKQPLPPQPQQPLSRYESQKRRDWNTFVQYLKSQNPPLMMSQFDYTHVLSFLRYLDQFGKTKVHHQACVFFGQPDPPGPCTCPLKQAWGSLDALIGRLRAAYEEHGGGSPDTNPFANGSIRVHLREVRESQAKARGIPYRKKKRRKTKNEVVVVKKDVANSSTPNQSFT</sequence>